<feature type="chain" id="PRO_0000321009" description="Protein translocase subunit SecA">
    <location>
        <begin position="1"/>
        <end position="902"/>
    </location>
</feature>
<feature type="region of interest" description="Disordered" evidence="2">
    <location>
        <begin position="851"/>
        <end position="902"/>
    </location>
</feature>
<feature type="compositionally biased region" description="Basic residues" evidence="2">
    <location>
        <begin position="892"/>
        <end position="902"/>
    </location>
</feature>
<feature type="binding site" evidence="1">
    <location>
        <position position="87"/>
    </location>
    <ligand>
        <name>ATP</name>
        <dbReference type="ChEBI" id="CHEBI:30616"/>
    </ligand>
</feature>
<feature type="binding site" evidence="1">
    <location>
        <begin position="105"/>
        <end position="109"/>
    </location>
    <ligand>
        <name>ATP</name>
        <dbReference type="ChEBI" id="CHEBI:30616"/>
    </ligand>
</feature>
<feature type="binding site" evidence="1">
    <location>
        <position position="512"/>
    </location>
    <ligand>
        <name>ATP</name>
        <dbReference type="ChEBI" id="CHEBI:30616"/>
    </ligand>
</feature>
<feature type="binding site" evidence="1">
    <location>
        <position position="886"/>
    </location>
    <ligand>
        <name>Zn(2+)</name>
        <dbReference type="ChEBI" id="CHEBI:29105"/>
    </ligand>
</feature>
<feature type="binding site" evidence="1">
    <location>
        <position position="888"/>
    </location>
    <ligand>
        <name>Zn(2+)</name>
        <dbReference type="ChEBI" id="CHEBI:29105"/>
    </ligand>
</feature>
<feature type="binding site" evidence="1">
    <location>
        <position position="897"/>
    </location>
    <ligand>
        <name>Zn(2+)</name>
        <dbReference type="ChEBI" id="CHEBI:29105"/>
    </ligand>
</feature>
<feature type="binding site" evidence="1">
    <location>
        <position position="898"/>
    </location>
    <ligand>
        <name>Zn(2+)</name>
        <dbReference type="ChEBI" id="CHEBI:29105"/>
    </ligand>
</feature>
<gene>
    <name evidence="1" type="primary">secA</name>
    <name type="ordered locus">SG0457</name>
</gene>
<accession>Q2NVU3</accession>
<proteinExistence type="inferred from homology"/>
<dbReference type="EC" id="7.4.2.8" evidence="1"/>
<dbReference type="EMBL" id="AP008232">
    <property type="protein sequence ID" value="BAE73732.1"/>
    <property type="molecule type" value="Genomic_DNA"/>
</dbReference>
<dbReference type="RefSeq" id="WP_011410430.1">
    <property type="nucleotide sequence ID" value="NC_007712.1"/>
</dbReference>
<dbReference type="SMR" id="Q2NVU3"/>
<dbReference type="STRING" id="343509.SG0457"/>
<dbReference type="KEGG" id="sgl:SG0457"/>
<dbReference type="eggNOG" id="COG0653">
    <property type="taxonomic scope" value="Bacteria"/>
</dbReference>
<dbReference type="HOGENOM" id="CLU_005314_3_0_6"/>
<dbReference type="OrthoDB" id="9805579at2"/>
<dbReference type="BioCyc" id="SGLO343509:SGP1_RS04055-MONOMER"/>
<dbReference type="Proteomes" id="UP000001932">
    <property type="component" value="Chromosome"/>
</dbReference>
<dbReference type="GO" id="GO:0031522">
    <property type="term" value="C:cell envelope Sec protein transport complex"/>
    <property type="evidence" value="ECO:0007669"/>
    <property type="project" value="TreeGrafter"/>
</dbReference>
<dbReference type="GO" id="GO:0005829">
    <property type="term" value="C:cytosol"/>
    <property type="evidence" value="ECO:0007669"/>
    <property type="project" value="TreeGrafter"/>
</dbReference>
<dbReference type="GO" id="GO:0005886">
    <property type="term" value="C:plasma membrane"/>
    <property type="evidence" value="ECO:0007669"/>
    <property type="project" value="UniProtKB-SubCell"/>
</dbReference>
<dbReference type="GO" id="GO:0005524">
    <property type="term" value="F:ATP binding"/>
    <property type="evidence" value="ECO:0007669"/>
    <property type="project" value="UniProtKB-UniRule"/>
</dbReference>
<dbReference type="GO" id="GO:0046872">
    <property type="term" value="F:metal ion binding"/>
    <property type="evidence" value="ECO:0007669"/>
    <property type="project" value="UniProtKB-KW"/>
</dbReference>
<dbReference type="GO" id="GO:0008564">
    <property type="term" value="F:protein-exporting ATPase activity"/>
    <property type="evidence" value="ECO:0007669"/>
    <property type="project" value="UniProtKB-EC"/>
</dbReference>
<dbReference type="GO" id="GO:0065002">
    <property type="term" value="P:intracellular protein transmembrane transport"/>
    <property type="evidence" value="ECO:0007669"/>
    <property type="project" value="UniProtKB-UniRule"/>
</dbReference>
<dbReference type="GO" id="GO:0017038">
    <property type="term" value="P:protein import"/>
    <property type="evidence" value="ECO:0007669"/>
    <property type="project" value="InterPro"/>
</dbReference>
<dbReference type="GO" id="GO:0006605">
    <property type="term" value="P:protein targeting"/>
    <property type="evidence" value="ECO:0007669"/>
    <property type="project" value="UniProtKB-UniRule"/>
</dbReference>
<dbReference type="GO" id="GO:0043952">
    <property type="term" value="P:protein transport by the Sec complex"/>
    <property type="evidence" value="ECO:0007669"/>
    <property type="project" value="TreeGrafter"/>
</dbReference>
<dbReference type="CDD" id="cd17928">
    <property type="entry name" value="DEXDc_SecA"/>
    <property type="match status" value="1"/>
</dbReference>
<dbReference type="CDD" id="cd18803">
    <property type="entry name" value="SF2_C_secA"/>
    <property type="match status" value="1"/>
</dbReference>
<dbReference type="FunFam" id="1.10.3060.10:FF:000001">
    <property type="entry name" value="Preprotein translocase subunit SecA"/>
    <property type="match status" value="1"/>
</dbReference>
<dbReference type="FunFam" id="3.40.50.300:FF:000081">
    <property type="entry name" value="Preprotein translocase subunit SecA"/>
    <property type="match status" value="1"/>
</dbReference>
<dbReference type="FunFam" id="3.40.50.300:FF:000113">
    <property type="entry name" value="Preprotein translocase subunit SecA"/>
    <property type="match status" value="1"/>
</dbReference>
<dbReference type="FunFam" id="3.90.1440.10:FF:000001">
    <property type="entry name" value="Preprotein translocase subunit SecA"/>
    <property type="match status" value="1"/>
</dbReference>
<dbReference type="Gene3D" id="1.10.3060.10">
    <property type="entry name" value="Helical scaffold and wing domains of SecA"/>
    <property type="match status" value="1"/>
</dbReference>
<dbReference type="Gene3D" id="3.40.50.300">
    <property type="entry name" value="P-loop containing nucleotide triphosphate hydrolases"/>
    <property type="match status" value="2"/>
</dbReference>
<dbReference type="Gene3D" id="3.90.1440.10">
    <property type="entry name" value="SecA, preprotein cross-linking domain"/>
    <property type="match status" value="1"/>
</dbReference>
<dbReference type="HAMAP" id="MF_01382">
    <property type="entry name" value="SecA"/>
    <property type="match status" value="1"/>
</dbReference>
<dbReference type="InterPro" id="IPR014001">
    <property type="entry name" value="Helicase_ATP-bd"/>
</dbReference>
<dbReference type="InterPro" id="IPR027417">
    <property type="entry name" value="P-loop_NTPase"/>
</dbReference>
<dbReference type="InterPro" id="IPR004027">
    <property type="entry name" value="SEC_C_motif"/>
</dbReference>
<dbReference type="InterPro" id="IPR000185">
    <property type="entry name" value="SecA"/>
</dbReference>
<dbReference type="InterPro" id="IPR020937">
    <property type="entry name" value="SecA_CS"/>
</dbReference>
<dbReference type="InterPro" id="IPR011115">
    <property type="entry name" value="SecA_DEAD"/>
</dbReference>
<dbReference type="InterPro" id="IPR014018">
    <property type="entry name" value="SecA_motor_DEAD"/>
</dbReference>
<dbReference type="InterPro" id="IPR011130">
    <property type="entry name" value="SecA_preprotein_X-link_dom"/>
</dbReference>
<dbReference type="InterPro" id="IPR044722">
    <property type="entry name" value="SecA_SF2_C"/>
</dbReference>
<dbReference type="InterPro" id="IPR011116">
    <property type="entry name" value="SecA_Wing/Scaffold"/>
</dbReference>
<dbReference type="InterPro" id="IPR036266">
    <property type="entry name" value="SecA_Wing/Scaffold_sf"/>
</dbReference>
<dbReference type="InterPro" id="IPR036670">
    <property type="entry name" value="SecA_X-link_sf"/>
</dbReference>
<dbReference type="NCBIfam" id="NF009538">
    <property type="entry name" value="PRK12904.1"/>
    <property type="match status" value="1"/>
</dbReference>
<dbReference type="NCBIfam" id="TIGR00963">
    <property type="entry name" value="secA"/>
    <property type="match status" value="1"/>
</dbReference>
<dbReference type="PANTHER" id="PTHR30612:SF0">
    <property type="entry name" value="CHLOROPLAST PROTEIN-TRANSPORTING ATPASE"/>
    <property type="match status" value="1"/>
</dbReference>
<dbReference type="PANTHER" id="PTHR30612">
    <property type="entry name" value="SECA INNER MEMBRANE COMPONENT OF SEC PROTEIN SECRETION SYSTEM"/>
    <property type="match status" value="1"/>
</dbReference>
<dbReference type="Pfam" id="PF21090">
    <property type="entry name" value="P-loop_SecA"/>
    <property type="match status" value="1"/>
</dbReference>
<dbReference type="Pfam" id="PF02810">
    <property type="entry name" value="SEC-C"/>
    <property type="match status" value="1"/>
</dbReference>
<dbReference type="Pfam" id="PF07517">
    <property type="entry name" value="SecA_DEAD"/>
    <property type="match status" value="1"/>
</dbReference>
<dbReference type="Pfam" id="PF01043">
    <property type="entry name" value="SecA_PP_bind"/>
    <property type="match status" value="1"/>
</dbReference>
<dbReference type="Pfam" id="PF07516">
    <property type="entry name" value="SecA_SW"/>
    <property type="match status" value="1"/>
</dbReference>
<dbReference type="PRINTS" id="PR00906">
    <property type="entry name" value="SECA"/>
</dbReference>
<dbReference type="SMART" id="SM00957">
    <property type="entry name" value="SecA_DEAD"/>
    <property type="match status" value="1"/>
</dbReference>
<dbReference type="SMART" id="SM00958">
    <property type="entry name" value="SecA_PP_bind"/>
    <property type="match status" value="1"/>
</dbReference>
<dbReference type="SUPFAM" id="SSF81886">
    <property type="entry name" value="Helical scaffold and wing domains of SecA"/>
    <property type="match status" value="1"/>
</dbReference>
<dbReference type="SUPFAM" id="SSF52540">
    <property type="entry name" value="P-loop containing nucleoside triphosphate hydrolases"/>
    <property type="match status" value="2"/>
</dbReference>
<dbReference type="SUPFAM" id="SSF81767">
    <property type="entry name" value="Pre-protein crosslinking domain of SecA"/>
    <property type="match status" value="1"/>
</dbReference>
<dbReference type="PROSITE" id="PS01312">
    <property type="entry name" value="SECA"/>
    <property type="match status" value="1"/>
</dbReference>
<dbReference type="PROSITE" id="PS51196">
    <property type="entry name" value="SECA_MOTOR_DEAD"/>
    <property type="match status" value="1"/>
</dbReference>
<protein>
    <recommendedName>
        <fullName evidence="1">Protein translocase subunit SecA</fullName>
        <ecNumber evidence="1">7.4.2.8</ecNumber>
    </recommendedName>
</protein>
<comment type="function">
    <text evidence="1">Part of the Sec protein translocase complex. Interacts with the SecYEG preprotein conducting channel. Has a central role in coupling the hydrolysis of ATP to the transfer of proteins into and across the cell membrane, serving both as a receptor for the preprotein-SecB complex and as an ATP-driven molecular motor driving the stepwise translocation of polypeptide chains across the membrane.</text>
</comment>
<comment type="catalytic activity">
    <reaction evidence="1">
        <text>ATP + H2O + cellular proteinSide 1 = ADP + phosphate + cellular proteinSide 2.</text>
        <dbReference type="EC" id="7.4.2.8"/>
    </reaction>
</comment>
<comment type="cofactor">
    <cofactor evidence="1">
        <name>Zn(2+)</name>
        <dbReference type="ChEBI" id="CHEBI:29105"/>
    </cofactor>
    <text evidence="1">May bind 1 zinc ion per subunit.</text>
</comment>
<comment type="subunit">
    <text evidence="1">Monomer and homodimer. Part of the essential Sec protein translocation apparatus which comprises SecA, SecYEG and auxiliary proteins SecDF-YajC and YidC.</text>
</comment>
<comment type="subcellular location">
    <subcellularLocation>
        <location evidence="1">Cell inner membrane</location>
        <topology evidence="1">Peripheral membrane protein</topology>
        <orientation evidence="1">Cytoplasmic side</orientation>
    </subcellularLocation>
    <subcellularLocation>
        <location evidence="1">Cytoplasm</location>
    </subcellularLocation>
    <text evidence="1">Distribution is 50-50.</text>
</comment>
<comment type="induction">
    <text evidence="1">Repressed under conditions of excess protein secretion capacity and derepressed when protein secretion becomes limiting. This is regulated by SecM.</text>
</comment>
<comment type="similarity">
    <text evidence="1">Belongs to the SecA family.</text>
</comment>
<keyword id="KW-0067">ATP-binding</keyword>
<keyword id="KW-0997">Cell inner membrane</keyword>
<keyword id="KW-1003">Cell membrane</keyword>
<keyword id="KW-0963">Cytoplasm</keyword>
<keyword id="KW-0472">Membrane</keyword>
<keyword id="KW-0479">Metal-binding</keyword>
<keyword id="KW-0547">Nucleotide-binding</keyword>
<keyword id="KW-0653">Protein transport</keyword>
<keyword id="KW-1278">Translocase</keyword>
<keyword id="KW-0811">Translocation</keyword>
<keyword id="KW-0813">Transport</keyword>
<keyword id="KW-0862">Zinc</keyword>
<evidence type="ECO:0000255" key="1">
    <source>
        <dbReference type="HAMAP-Rule" id="MF_01382"/>
    </source>
</evidence>
<evidence type="ECO:0000256" key="2">
    <source>
        <dbReference type="SAM" id="MobiDB-lite"/>
    </source>
</evidence>
<name>SECA_SODGM</name>
<organism>
    <name type="scientific">Sodalis glossinidius (strain morsitans)</name>
    <dbReference type="NCBI Taxonomy" id="343509"/>
    <lineage>
        <taxon>Bacteria</taxon>
        <taxon>Pseudomonadati</taxon>
        <taxon>Pseudomonadota</taxon>
        <taxon>Gammaproteobacteria</taxon>
        <taxon>Enterobacterales</taxon>
        <taxon>Bruguierivoracaceae</taxon>
        <taxon>Sodalis</taxon>
    </lineage>
</organism>
<reference key="1">
    <citation type="journal article" date="2006" name="Genome Res.">
        <title>Massive genome erosion and functional adaptations provide insights into the symbiotic lifestyle of Sodalis glossinidius in the tsetse host.</title>
        <authorList>
            <person name="Toh H."/>
            <person name="Weiss B.L."/>
            <person name="Perkin S.A.H."/>
            <person name="Yamashita A."/>
            <person name="Oshima K."/>
            <person name="Hattori M."/>
            <person name="Aksoy S."/>
        </authorList>
    </citation>
    <scope>NUCLEOTIDE SEQUENCE [LARGE SCALE GENOMIC DNA]</scope>
    <source>
        <strain>morsitans</strain>
    </source>
</reference>
<sequence length="902" mass="101398">MLAKLLTKIFGSRNDRTLCRMSKAVDAINQMEPAMEQLSDEQLAAKTVEFRDCIAQGATVDSLLPEAFAVVREASKRVFGMRHFDVQLMGGMVLNDRCIAEMRTGEGKTLTATLPAYLNALSGKGVHVVTVNDYLAQRDAENNRPLFEFLGLSVGINLPGLPAPAKRAAYAADITYGTNNEYGFDYLRDNMAFSPEERVQRKLHYALVDEVDSILIDEARTPLIISGPAEDSSDMYRRVDKLIPHLIRQDKEDSESFQGEGHFSVDEKSRQVNLTERGLMLIEELLVKAGIMEEGESLYSPANIMLMHHVTAALRAHVLFARDVDYIVKDGEVIIVDEHTGRTMPGRRWSDGLHQAVEAKENVAIQNENQTLASITFQNYFRLYEKLAGMTGTADTEAFEFSSIYKLDTIVVPTNRPMIRKDLADLVYMTEKEKIDAIIEDIKTCTERGQPVLVGTISIEKSELVSGELEKAGIAHKVLNAKFHAMEADIVAQAGQPGAVTIATNMAGRGTDIVLGGSWQAEVAALESPDEQQIAAIKDAWQPRHEAVLAAGGLHIIGTERHESRRIDNQLRGRSGRQGDAGSSRFYLSMEDALMRIFASDRVSGMMRKLGMKPGEAIEHPWVTKAIANAQRKVESRNFDIRKQLLEYDDVANDQRCAIYTQRNELLDVADISETVKSIREDVLKTILDSYIPPQSLEEMWDVQGLEHRLKDDFDLDMPVAQWLDDEPGLHEEILRERVLEQMLAQYQRKEEIVGSDIMRNFEKGVMLQTLDSLWKEHLAAMDYLRQGIHLRGYAQKDPKQEYKRESFAMFAAMLESLKYEVISMLSKVQVRMPEEVEAMEQQRREEAERLARQQQLSHQAPVEELTQGSAAAAQEGRKVGRNDPCPCGSGKKFKHCHGKLQ</sequence>